<sequence>MLSKCRFVAGVQDKHSLPDFQVPEVAFAGRSNVGKSSLINAVTKNKKGARVSSNPGSTRQINFYLNEGALALVDLPGYGYSKASKESASSYMSLVEHYLLTREALHRLVLLIDSKVGLKEVDMDFISWLEERCIHYSLVLTKIDRLACTEFNDVLSAVQSRVKGCCMLLHPIIGTSSKSGKGIKELVHEVSKCVKEWPGGRDVRA</sequence>
<evidence type="ECO:0000255" key="1">
    <source>
        <dbReference type="HAMAP-Rule" id="MF_00321"/>
    </source>
</evidence>
<accession>Q5PAH3</accession>
<feature type="chain" id="PRO_0000266808" description="Probable GTP-binding protein EngB">
    <location>
        <begin position="1"/>
        <end position="205"/>
    </location>
</feature>
<feature type="domain" description="EngB-type G" evidence="1">
    <location>
        <begin position="21"/>
        <end position="196"/>
    </location>
</feature>
<feature type="binding site" evidence="1">
    <location>
        <begin position="29"/>
        <end position="36"/>
    </location>
    <ligand>
        <name>GTP</name>
        <dbReference type="ChEBI" id="CHEBI:37565"/>
    </ligand>
</feature>
<feature type="binding site" evidence="1">
    <location>
        <position position="36"/>
    </location>
    <ligand>
        <name>Mg(2+)</name>
        <dbReference type="ChEBI" id="CHEBI:18420"/>
    </ligand>
</feature>
<feature type="binding site" evidence="1">
    <location>
        <begin position="56"/>
        <end position="60"/>
    </location>
    <ligand>
        <name>GTP</name>
        <dbReference type="ChEBI" id="CHEBI:37565"/>
    </ligand>
</feature>
<feature type="binding site" evidence="1">
    <location>
        <position position="58"/>
    </location>
    <ligand>
        <name>Mg(2+)</name>
        <dbReference type="ChEBI" id="CHEBI:18420"/>
    </ligand>
</feature>
<feature type="binding site" evidence="1">
    <location>
        <begin position="74"/>
        <end position="77"/>
    </location>
    <ligand>
        <name>GTP</name>
        <dbReference type="ChEBI" id="CHEBI:37565"/>
    </ligand>
</feature>
<feature type="binding site" evidence="1">
    <location>
        <begin position="141"/>
        <end position="144"/>
    </location>
    <ligand>
        <name>GTP</name>
        <dbReference type="ChEBI" id="CHEBI:37565"/>
    </ligand>
</feature>
<feature type="binding site" evidence="1">
    <location>
        <begin position="172"/>
        <end position="177"/>
    </location>
    <ligand>
        <name>GTP</name>
        <dbReference type="ChEBI" id="CHEBI:37565"/>
    </ligand>
</feature>
<proteinExistence type="inferred from homology"/>
<name>ENGB_ANAMM</name>
<comment type="function">
    <text evidence="1">Necessary for normal cell division and for the maintenance of normal septation.</text>
</comment>
<comment type="cofactor">
    <cofactor evidence="1">
        <name>Mg(2+)</name>
        <dbReference type="ChEBI" id="CHEBI:18420"/>
    </cofactor>
</comment>
<comment type="similarity">
    <text evidence="1">Belongs to the TRAFAC class TrmE-Era-EngA-EngB-Septin-like GTPase superfamily. EngB GTPase family.</text>
</comment>
<dbReference type="EMBL" id="CP000030">
    <property type="protein sequence ID" value="AAV86707.1"/>
    <property type="molecule type" value="Genomic_DNA"/>
</dbReference>
<dbReference type="SMR" id="Q5PAH3"/>
<dbReference type="KEGG" id="ama:AM764"/>
<dbReference type="HOGENOM" id="CLU_033732_2_0_5"/>
<dbReference type="GO" id="GO:0005525">
    <property type="term" value="F:GTP binding"/>
    <property type="evidence" value="ECO:0007669"/>
    <property type="project" value="UniProtKB-UniRule"/>
</dbReference>
<dbReference type="GO" id="GO:0046872">
    <property type="term" value="F:metal ion binding"/>
    <property type="evidence" value="ECO:0007669"/>
    <property type="project" value="UniProtKB-KW"/>
</dbReference>
<dbReference type="GO" id="GO:0000917">
    <property type="term" value="P:division septum assembly"/>
    <property type="evidence" value="ECO:0007669"/>
    <property type="project" value="UniProtKB-KW"/>
</dbReference>
<dbReference type="CDD" id="cd01876">
    <property type="entry name" value="YihA_EngB"/>
    <property type="match status" value="1"/>
</dbReference>
<dbReference type="Gene3D" id="3.40.50.300">
    <property type="entry name" value="P-loop containing nucleotide triphosphate hydrolases"/>
    <property type="match status" value="1"/>
</dbReference>
<dbReference type="HAMAP" id="MF_00321">
    <property type="entry name" value="GTPase_EngB"/>
    <property type="match status" value="1"/>
</dbReference>
<dbReference type="InterPro" id="IPR030393">
    <property type="entry name" value="G_ENGB_dom"/>
</dbReference>
<dbReference type="InterPro" id="IPR006073">
    <property type="entry name" value="GTP-bd"/>
</dbReference>
<dbReference type="InterPro" id="IPR019987">
    <property type="entry name" value="GTP-bd_ribosome_bio_YsxC"/>
</dbReference>
<dbReference type="InterPro" id="IPR027417">
    <property type="entry name" value="P-loop_NTPase"/>
</dbReference>
<dbReference type="NCBIfam" id="TIGR03598">
    <property type="entry name" value="GTPase_YsxC"/>
    <property type="match status" value="1"/>
</dbReference>
<dbReference type="PANTHER" id="PTHR11649:SF13">
    <property type="entry name" value="ENGB-TYPE G DOMAIN-CONTAINING PROTEIN"/>
    <property type="match status" value="1"/>
</dbReference>
<dbReference type="PANTHER" id="PTHR11649">
    <property type="entry name" value="MSS1/TRME-RELATED GTP-BINDING PROTEIN"/>
    <property type="match status" value="1"/>
</dbReference>
<dbReference type="Pfam" id="PF01926">
    <property type="entry name" value="MMR_HSR1"/>
    <property type="match status" value="1"/>
</dbReference>
<dbReference type="SUPFAM" id="SSF52540">
    <property type="entry name" value="P-loop containing nucleoside triphosphate hydrolases"/>
    <property type="match status" value="1"/>
</dbReference>
<dbReference type="PROSITE" id="PS51706">
    <property type="entry name" value="G_ENGB"/>
    <property type="match status" value="1"/>
</dbReference>
<organism>
    <name type="scientific">Anaplasma marginale (strain St. Maries)</name>
    <dbReference type="NCBI Taxonomy" id="234826"/>
    <lineage>
        <taxon>Bacteria</taxon>
        <taxon>Pseudomonadati</taxon>
        <taxon>Pseudomonadota</taxon>
        <taxon>Alphaproteobacteria</taxon>
        <taxon>Rickettsiales</taxon>
        <taxon>Anaplasmataceae</taxon>
        <taxon>Anaplasma</taxon>
    </lineage>
</organism>
<reference key="1">
    <citation type="journal article" date="2005" name="Proc. Natl. Acad. Sci. U.S.A.">
        <title>Complete genome sequencing of Anaplasma marginale reveals that the surface is skewed to two superfamilies of outer membrane proteins.</title>
        <authorList>
            <person name="Brayton K.A."/>
            <person name="Kappmeyer L.S."/>
            <person name="Herndon D.R."/>
            <person name="Dark M.J."/>
            <person name="Tibbals D.L."/>
            <person name="Palmer G.H."/>
            <person name="McGuire T.C."/>
            <person name="Knowles D.P. Jr."/>
        </authorList>
    </citation>
    <scope>NUCLEOTIDE SEQUENCE [LARGE SCALE GENOMIC DNA]</scope>
    <source>
        <strain>St. Maries</strain>
    </source>
</reference>
<keyword id="KW-0131">Cell cycle</keyword>
<keyword id="KW-0132">Cell division</keyword>
<keyword id="KW-0342">GTP-binding</keyword>
<keyword id="KW-0460">Magnesium</keyword>
<keyword id="KW-0479">Metal-binding</keyword>
<keyword id="KW-0547">Nucleotide-binding</keyword>
<keyword id="KW-0717">Septation</keyword>
<gene>
    <name evidence="1" type="primary">engB</name>
    <name type="ordered locus">AM764</name>
</gene>
<protein>
    <recommendedName>
        <fullName evidence="1">Probable GTP-binding protein EngB</fullName>
    </recommendedName>
</protein>